<organism>
    <name type="scientific">Coxiella burnetii (strain CbuG_Q212)</name>
    <name type="common">Coxiella burnetii (strain Q212)</name>
    <dbReference type="NCBI Taxonomy" id="434923"/>
    <lineage>
        <taxon>Bacteria</taxon>
        <taxon>Pseudomonadati</taxon>
        <taxon>Pseudomonadota</taxon>
        <taxon>Gammaproteobacteria</taxon>
        <taxon>Legionellales</taxon>
        <taxon>Coxiellaceae</taxon>
        <taxon>Coxiella</taxon>
    </lineage>
</organism>
<protein>
    <recommendedName>
        <fullName evidence="1">Transcriptional repressor NrdR</fullName>
    </recommendedName>
</protein>
<proteinExistence type="inferred from homology"/>
<sequence>MYCPFCNAEDTKVIDSRLVEEGTQVRRRRECLKCQERFTTFETAELNLPRIIKRDGRRSAFDEEKLRAGLLKALEKRPISTEQIETAVQRIIHKLRARGECEVSSQWLGELVMDELRALDEVAYVRFASVYRSFQDINAFRDEIRRLQKQQKKSHDK</sequence>
<accession>B6IZ81</accession>
<keyword id="KW-0067">ATP-binding</keyword>
<keyword id="KW-0238">DNA-binding</keyword>
<keyword id="KW-0479">Metal-binding</keyword>
<keyword id="KW-0547">Nucleotide-binding</keyword>
<keyword id="KW-0678">Repressor</keyword>
<keyword id="KW-0804">Transcription</keyword>
<keyword id="KW-0805">Transcription regulation</keyword>
<keyword id="KW-0862">Zinc</keyword>
<keyword id="KW-0863">Zinc-finger</keyword>
<name>NRDR_COXB2</name>
<comment type="function">
    <text evidence="1">Negatively regulates transcription of bacterial ribonucleotide reductase nrd genes and operons by binding to NrdR-boxes.</text>
</comment>
<comment type="cofactor">
    <cofactor evidence="1">
        <name>Zn(2+)</name>
        <dbReference type="ChEBI" id="CHEBI:29105"/>
    </cofactor>
    <text evidence="1">Binds 1 zinc ion.</text>
</comment>
<comment type="similarity">
    <text evidence="1">Belongs to the NrdR family.</text>
</comment>
<feature type="chain" id="PRO_1000124489" description="Transcriptional repressor NrdR">
    <location>
        <begin position="1"/>
        <end position="157"/>
    </location>
</feature>
<feature type="domain" description="ATP-cone" evidence="1">
    <location>
        <begin position="49"/>
        <end position="139"/>
    </location>
</feature>
<feature type="zinc finger region" evidence="1">
    <location>
        <begin position="3"/>
        <end position="34"/>
    </location>
</feature>
<evidence type="ECO:0000255" key="1">
    <source>
        <dbReference type="HAMAP-Rule" id="MF_00440"/>
    </source>
</evidence>
<reference key="1">
    <citation type="journal article" date="2009" name="Infect. Immun.">
        <title>Comparative genomics reveal extensive transposon-mediated genomic plasticity and diversity among potential effector proteins within the genus Coxiella.</title>
        <authorList>
            <person name="Beare P.A."/>
            <person name="Unsworth N."/>
            <person name="Andoh M."/>
            <person name="Voth D.E."/>
            <person name="Omsland A."/>
            <person name="Gilk S.D."/>
            <person name="Williams K.P."/>
            <person name="Sobral B.W."/>
            <person name="Kupko J.J. III"/>
            <person name="Porcella S.F."/>
            <person name="Samuel J.E."/>
            <person name="Heinzen R.A."/>
        </authorList>
    </citation>
    <scope>NUCLEOTIDE SEQUENCE [LARGE SCALE GENOMIC DNA]</scope>
    <source>
        <strain>CbuG_Q212</strain>
    </source>
</reference>
<dbReference type="EMBL" id="CP001019">
    <property type="protein sequence ID" value="ACJ18009.1"/>
    <property type="molecule type" value="Genomic_DNA"/>
</dbReference>
<dbReference type="RefSeq" id="WP_005771735.1">
    <property type="nucleotide sequence ID" value="NC_011527.1"/>
</dbReference>
<dbReference type="SMR" id="B6IZ81"/>
<dbReference type="KEGG" id="cbg:CbuG_0598"/>
<dbReference type="HOGENOM" id="CLU_108412_0_0_6"/>
<dbReference type="GO" id="GO:0005524">
    <property type="term" value="F:ATP binding"/>
    <property type="evidence" value="ECO:0007669"/>
    <property type="project" value="UniProtKB-KW"/>
</dbReference>
<dbReference type="GO" id="GO:0003677">
    <property type="term" value="F:DNA binding"/>
    <property type="evidence" value="ECO:0007669"/>
    <property type="project" value="UniProtKB-KW"/>
</dbReference>
<dbReference type="GO" id="GO:0008270">
    <property type="term" value="F:zinc ion binding"/>
    <property type="evidence" value="ECO:0007669"/>
    <property type="project" value="UniProtKB-UniRule"/>
</dbReference>
<dbReference type="GO" id="GO:0045892">
    <property type="term" value="P:negative regulation of DNA-templated transcription"/>
    <property type="evidence" value="ECO:0007669"/>
    <property type="project" value="UniProtKB-UniRule"/>
</dbReference>
<dbReference type="HAMAP" id="MF_00440">
    <property type="entry name" value="NrdR"/>
    <property type="match status" value="1"/>
</dbReference>
<dbReference type="InterPro" id="IPR005144">
    <property type="entry name" value="ATP-cone_dom"/>
</dbReference>
<dbReference type="InterPro" id="IPR055173">
    <property type="entry name" value="NrdR-like_N"/>
</dbReference>
<dbReference type="InterPro" id="IPR003796">
    <property type="entry name" value="RNR_NrdR-like"/>
</dbReference>
<dbReference type="NCBIfam" id="TIGR00244">
    <property type="entry name" value="transcriptional regulator NrdR"/>
    <property type="match status" value="1"/>
</dbReference>
<dbReference type="PANTHER" id="PTHR30455">
    <property type="entry name" value="TRANSCRIPTIONAL REPRESSOR NRDR"/>
    <property type="match status" value="1"/>
</dbReference>
<dbReference type="PANTHER" id="PTHR30455:SF2">
    <property type="entry name" value="TRANSCRIPTIONAL REPRESSOR NRDR"/>
    <property type="match status" value="1"/>
</dbReference>
<dbReference type="Pfam" id="PF03477">
    <property type="entry name" value="ATP-cone"/>
    <property type="match status" value="1"/>
</dbReference>
<dbReference type="Pfam" id="PF22811">
    <property type="entry name" value="Zn_ribbon_NrdR"/>
    <property type="match status" value="1"/>
</dbReference>
<dbReference type="PROSITE" id="PS51161">
    <property type="entry name" value="ATP_CONE"/>
    <property type="match status" value="1"/>
</dbReference>
<gene>
    <name evidence="1" type="primary">nrdR</name>
    <name type="ordered locus">CbuG_0598</name>
</gene>